<dbReference type="PIR" id="A02895">
    <property type="entry name" value="CYOIAA"/>
</dbReference>
<dbReference type="RefSeq" id="XP_004594146.1">
    <property type="nucleotide sequence ID" value="XM_004594089.1"/>
</dbReference>
<dbReference type="SMR" id="P02492"/>
<dbReference type="GlyCosmos" id="P02492">
    <property type="glycosylation" value="1 site, No reported glycans"/>
</dbReference>
<dbReference type="KEGG" id="opi:101520527"/>
<dbReference type="HOGENOM" id="CLU_095001_5_0_1"/>
<dbReference type="OrthoDB" id="1431247at2759"/>
<dbReference type="GO" id="GO:0005737">
    <property type="term" value="C:cytoplasm"/>
    <property type="evidence" value="ECO:0000250"/>
    <property type="project" value="UniProtKB"/>
</dbReference>
<dbReference type="GO" id="GO:0005634">
    <property type="term" value="C:nucleus"/>
    <property type="evidence" value="ECO:0000250"/>
    <property type="project" value="UniProtKB"/>
</dbReference>
<dbReference type="GO" id="GO:0046872">
    <property type="term" value="F:metal ion binding"/>
    <property type="evidence" value="ECO:0007669"/>
    <property type="project" value="UniProtKB-KW"/>
</dbReference>
<dbReference type="GO" id="GO:0005212">
    <property type="term" value="F:structural constituent of eye lens"/>
    <property type="evidence" value="ECO:0007669"/>
    <property type="project" value="UniProtKB-KW"/>
</dbReference>
<dbReference type="GO" id="GO:0051082">
    <property type="term" value="F:unfolded protein binding"/>
    <property type="evidence" value="ECO:0007669"/>
    <property type="project" value="TreeGrafter"/>
</dbReference>
<dbReference type="GO" id="GO:0002088">
    <property type="term" value="P:lens development in camera-type eye"/>
    <property type="evidence" value="ECO:0007669"/>
    <property type="project" value="TreeGrafter"/>
</dbReference>
<dbReference type="GO" id="GO:0043066">
    <property type="term" value="P:negative regulation of apoptotic process"/>
    <property type="evidence" value="ECO:0007669"/>
    <property type="project" value="TreeGrafter"/>
</dbReference>
<dbReference type="GO" id="GO:0042026">
    <property type="term" value="P:protein refolding"/>
    <property type="evidence" value="ECO:0007669"/>
    <property type="project" value="TreeGrafter"/>
</dbReference>
<dbReference type="GO" id="GO:0009408">
    <property type="term" value="P:response to heat"/>
    <property type="evidence" value="ECO:0007669"/>
    <property type="project" value="TreeGrafter"/>
</dbReference>
<dbReference type="FunFam" id="2.60.40.790:FF:000008">
    <property type="entry name" value="Alpha-crystallin A chain"/>
    <property type="match status" value="1"/>
</dbReference>
<dbReference type="Gene3D" id="2.60.40.790">
    <property type="match status" value="1"/>
</dbReference>
<dbReference type="InterPro" id="IPR002068">
    <property type="entry name" value="A-crystallin/Hsp20_dom"/>
</dbReference>
<dbReference type="InterPro" id="IPR055269">
    <property type="entry name" value="Alpha-crystallin/HSP_16"/>
</dbReference>
<dbReference type="InterPro" id="IPR001436">
    <property type="entry name" value="Alpha-crystallin/sHSP_animal"/>
</dbReference>
<dbReference type="InterPro" id="IPR003090">
    <property type="entry name" value="Alpha-crystallin_N"/>
</dbReference>
<dbReference type="InterPro" id="IPR008978">
    <property type="entry name" value="HSP20-like_chaperone"/>
</dbReference>
<dbReference type="PANTHER" id="PTHR45640:SF14">
    <property type="entry name" value="ALPHA-CRYSTALLIN A CHAIN"/>
    <property type="match status" value="1"/>
</dbReference>
<dbReference type="PANTHER" id="PTHR45640">
    <property type="entry name" value="HEAT SHOCK PROTEIN HSP-12.2-RELATED"/>
    <property type="match status" value="1"/>
</dbReference>
<dbReference type="Pfam" id="PF00525">
    <property type="entry name" value="Crystallin"/>
    <property type="match status" value="1"/>
</dbReference>
<dbReference type="Pfam" id="PF00011">
    <property type="entry name" value="HSP20"/>
    <property type="match status" value="1"/>
</dbReference>
<dbReference type="PIRSF" id="PIRSF036514">
    <property type="entry name" value="Sm_HSP_B1"/>
    <property type="match status" value="1"/>
</dbReference>
<dbReference type="PRINTS" id="PR00299">
    <property type="entry name" value="ACRYSTALLIN"/>
</dbReference>
<dbReference type="SUPFAM" id="SSF49764">
    <property type="entry name" value="HSP20-like chaperones"/>
    <property type="match status" value="1"/>
</dbReference>
<dbReference type="PROSITE" id="PS01031">
    <property type="entry name" value="SHSP"/>
    <property type="match status" value="1"/>
</dbReference>
<reference key="1">
    <citation type="book" date="1980" name="Protides of the biological fluids, Proc. 28th colloquium">
        <title>Trends in the molecular evolution of alpha-crystallin.</title>
        <editorList>
            <person name="Peeters H."/>
        </editorList>
        <authorList>
            <person name="de Jong W.W."/>
            <person name="Zweers A."/>
            <person name="Goodman M."/>
        </authorList>
    </citation>
    <scope>PARTIAL PROTEIN SEQUENCE</scope>
</reference>
<feature type="chain" id="PRO_0000125874" description="Alpha-crystallin A chain">
    <location>
        <begin position="1"/>
        <end position="173"/>
    </location>
</feature>
<feature type="domain" description="sHSP" evidence="5">
    <location>
        <begin position="52"/>
        <end position="162"/>
    </location>
</feature>
<feature type="region of interest" description="Required for complex formation with BFSP1 and BFSP2" evidence="4">
    <location>
        <begin position="1"/>
        <end position="63"/>
    </location>
</feature>
<feature type="region of interest" description="Disordered" evidence="6">
    <location>
        <begin position="145"/>
        <end position="173"/>
    </location>
</feature>
<feature type="compositionally biased region" description="Basic and acidic residues" evidence="6">
    <location>
        <begin position="153"/>
        <end position="167"/>
    </location>
</feature>
<feature type="binding site" evidence="2">
    <location>
        <position position="100"/>
    </location>
    <ligand>
        <name>Zn(2+)</name>
        <dbReference type="ChEBI" id="CHEBI:29105"/>
        <label>1</label>
    </ligand>
</feature>
<feature type="binding site" evidence="2">
    <location>
        <position position="102"/>
    </location>
    <ligand>
        <name>Zn(2+)</name>
        <dbReference type="ChEBI" id="CHEBI:29105"/>
        <label>1</label>
    </ligand>
</feature>
<feature type="binding site" evidence="2">
    <location>
        <position position="107"/>
    </location>
    <ligand>
        <name>Zn(2+)</name>
        <dbReference type="ChEBI" id="CHEBI:29105"/>
        <label>2</label>
    </ligand>
</feature>
<feature type="binding site" evidence="2">
    <location>
        <position position="154"/>
    </location>
    <ligand>
        <name>Zn(2+)</name>
        <dbReference type="ChEBI" id="CHEBI:29105"/>
        <label>3</label>
    </ligand>
</feature>
<feature type="modified residue" description="N-acetylmethionine" evidence="3 7">
    <location>
        <position position="1"/>
    </location>
</feature>
<feature type="modified residue" description="Deamidated glutamine; partial" evidence="1">
    <location>
        <position position="6"/>
    </location>
</feature>
<feature type="modified residue" description="Phosphoserine" evidence="4">
    <location>
        <position position="45"/>
    </location>
</feature>
<feature type="modified residue" description="Deamidated glutamine; partial" evidence="1">
    <location>
        <position position="50"/>
    </location>
</feature>
<feature type="modified residue" description="N6-acetyllysine" evidence="4">
    <location>
        <position position="70"/>
    </location>
</feature>
<feature type="modified residue" description="Deamidated glutamine; partial" evidence="1">
    <location>
        <position position="90"/>
    </location>
</feature>
<feature type="modified residue" description="N6-acetyllysine" evidence="4">
    <location>
        <position position="99"/>
    </location>
</feature>
<feature type="modified residue" description="Phosphoserine" evidence="2">
    <location>
        <position position="122"/>
    </location>
</feature>
<feature type="modified residue" description="Deamidated asparagine; partial" evidence="1">
    <location>
        <position position="123"/>
    </location>
</feature>
<feature type="modified residue" description="Deamidated glutamine; partial" evidence="1">
    <location>
        <position position="147"/>
    </location>
</feature>
<feature type="glycosylation site" description="O-linked (GlcNAc) serine" evidence="1">
    <location>
        <position position="162"/>
    </location>
</feature>
<sequence length="173" mass="19780">MDVTIQHPWFKRALGPFYPSRLFDQFFGEGLFEYDLLPFLSSTISPYYRQSLFRTVLDSGISEVRSDRDKFVIFLDVKHFSPEDLTVKVQEDFVEIHGKHSERQDDHGYISREFHRRYRLPSNVDQSALSCSLSADGMLTFSGPKVQSGLDAGHSERAIPVSREEKPSSAPSS</sequence>
<comment type="function">
    <text evidence="4">Contributes to the transparency and refractive index of the lens. Acts as a chaperone, preventing aggregation of various proteins under a wide range of stress conditions. Required for the correct formation of lens intermediate filaments as part of a complex composed of BFSP1, BFSP2 and CRYAA.</text>
</comment>
<comment type="subunit">
    <text evidence="2 4">Heteromer composed of three CRYAA and one CRYAB subunits. Inter-subunit bridging via zinc ions enhances stability, which is crucial as there is no protein turn over in the lens. Can also form homodimers and homotetramers (dimers of dimers) which serve as the building blocks of homooligomers (By similarity). Within homooligomers, the zinc-binding motif is created from residues of 3 different molecules. His-100 and Glu-102 from one molecule are ligands of the zinc ion, and His-107 and His-154 residues from additional molecules complete the site with tetrahedral coordination geometry (By similarity). Part of a complex required for lens intermediate filament formation composed of BFSP1, BFSP2 and CRYAA (By similarity).</text>
</comment>
<comment type="subcellular location">
    <subcellularLocation>
        <location evidence="4">Cytoplasm</location>
    </subcellularLocation>
    <subcellularLocation>
        <location evidence="4">Nucleus</location>
    </subcellularLocation>
    <text evidence="4">Translocates to the nucleus during heat shock and resides in sub-nuclear structures known as SC35 speckles or nuclear splicing speckles.</text>
</comment>
<comment type="PTM">
    <text evidence="4">Acetylation at Lys-70 may increase chaperone activity.</text>
</comment>
<comment type="PTM">
    <text evidence="4">Undergoes age-dependent proteolytical cleavage at the C-terminus.</text>
</comment>
<comment type="similarity">
    <text evidence="5">Belongs to the small heat shock protein (HSP20) family.</text>
</comment>
<keyword id="KW-0007">Acetylation</keyword>
<keyword id="KW-0143">Chaperone</keyword>
<keyword id="KW-0963">Cytoplasm</keyword>
<keyword id="KW-0903">Direct protein sequencing</keyword>
<keyword id="KW-0273">Eye lens protein</keyword>
<keyword id="KW-0325">Glycoprotein</keyword>
<keyword id="KW-0479">Metal-binding</keyword>
<keyword id="KW-0488">Methylation</keyword>
<keyword id="KW-0539">Nucleus</keyword>
<keyword id="KW-0597">Phosphoprotein</keyword>
<keyword id="KW-0862">Zinc</keyword>
<gene>
    <name type="primary">CRYAA</name>
</gene>
<protein>
    <recommendedName>
        <fullName>Alpha-crystallin A chain</fullName>
    </recommendedName>
</protein>
<proteinExistence type="evidence at protein level"/>
<accession>P02492</accession>
<name>CRYAA_OCHPR</name>
<evidence type="ECO:0000250" key="1"/>
<evidence type="ECO:0000250" key="2">
    <source>
        <dbReference type="UniProtKB" id="P02470"/>
    </source>
</evidence>
<evidence type="ECO:0000250" key="3">
    <source>
        <dbReference type="UniProtKB" id="P02474"/>
    </source>
</evidence>
<evidence type="ECO:0000250" key="4">
    <source>
        <dbReference type="UniProtKB" id="P02489"/>
    </source>
</evidence>
<evidence type="ECO:0000255" key="5">
    <source>
        <dbReference type="PROSITE-ProRule" id="PRU00285"/>
    </source>
</evidence>
<evidence type="ECO:0000256" key="6">
    <source>
        <dbReference type="SAM" id="MobiDB-lite"/>
    </source>
</evidence>
<evidence type="ECO:0000305" key="7"/>
<organism>
    <name type="scientific">Ochotona princeps</name>
    <name type="common">Southern American pika</name>
    <dbReference type="NCBI Taxonomy" id="9978"/>
    <lineage>
        <taxon>Eukaryota</taxon>
        <taxon>Metazoa</taxon>
        <taxon>Chordata</taxon>
        <taxon>Craniata</taxon>
        <taxon>Vertebrata</taxon>
        <taxon>Euteleostomi</taxon>
        <taxon>Mammalia</taxon>
        <taxon>Eutheria</taxon>
        <taxon>Euarchontoglires</taxon>
        <taxon>Glires</taxon>
        <taxon>Lagomorpha</taxon>
        <taxon>Ochotonidae</taxon>
        <taxon>Ochotona</taxon>
    </lineage>
</organism>